<name>RL5_CELJU</name>
<sequence length="179" mass="20174">MARLKELYTKELAPKLKEELGLANVMEVPRITKITINMGVGEAVGDKKVLENAVNDLVKIAGQKVVVTKSRKSIAGFKIRDGWPIGCKVTLRKDRMYEFLDRLIAVAIPRIRDFRGISPKQFDGRGNFSMGVTEQIIFPEIDYDKVDRLRGLDICITTTARTDEEGRALLKAFNFPFKG</sequence>
<gene>
    <name evidence="1" type="primary">rplE</name>
    <name type="ordered locus">CJA_0711</name>
</gene>
<feature type="chain" id="PRO_1000142369" description="Large ribosomal subunit protein uL5">
    <location>
        <begin position="1"/>
        <end position="179"/>
    </location>
</feature>
<protein>
    <recommendedName>
        <fullName evidence="1">Large ribosomal subunit protein uL5</fullName>
    </recommendedName>
    <alternativeName>
        <fullName evidence="2">50S ribosomal protein L5</fullName>
    </alternativeName>
</protein>
<proteinExistence type="inferred from homology"/>
<organism>
    <name type="scientific">Cellvibrio japonicus (strain Ueda107)</name>
    <name type="common">Pseudomonas fluorescens subsp. cellulosa</name>
    <dbReference type="NCBI Taxonomy" id="498211"/>
    <lineage>
        <taxon>Bacteria</taxon>
        <taxon>Pseudomonadati</taxon>
        <taxon>Pseudomonadota</taxon>
        <taxon>Gammaproteobacteria</taxon>
        <taxon>Cellvibrionales</taxon>
        <taxon>Cellvibrionaceae</taxon>
        <taxon>Cellvibrio</taxon>
    </lineage>
</organism>
<reference key="1">
    <citation type="journal article" date="2008" name="J. Bacteriol.">
        <title>Insights into plant cell wall degradation from the genome sequence of the soil bacterium Cellvibrio japonicus.</title>
        <authorList>
            <person name="DeBoy R.T."/>
            <person name="Mongodin E.F."/>
            <person name="Fouts D.E."/>
            <person name="Tailford L.E."/>
            <person name="Khouri H."/>
            <person name="Emerson J.B."/>
            <person name="Mohamoud Y."/>
            <person name="Watkins K."/>
            <person name="Henrissat B."/>
            <person name="Gilbert H.J."/>
            <person name="Nelson K.E."/>
        </authorList>
    </citation>
    <scope>NUCLEOTIDE SEQUENCE [LARGE SCALE GENOMIC DNA]</scope>
    <source>
        <strain>Ueda107</strain>
    </source>
</reference>
<keyword id="KW-1185">Reference proteome</keyword>
<keyword id="KW-0687">Ribonucleoprotein</keyword>
<keyword id="KW-0689">Ribosomal protein</keyword>
<keyword id="KW-0694">RNA-binding</keyword>
<keyword id="KW-0699">rRNA-binding</keyword>
<keyword id="KW-0820">tRNA-binding</keyword>
<comment type="function">
    <text evidence="1">This is one of the proteins that bind and probably mediate the attachment of the 5S RNA into the large ribosomal subunit, where it forms part of the central protuberance. In the 70S ribosome it contacts protein S13 of the 30S subunit (bridge B1b), connecting the 2 subunits; this bridge is implicated in subunit movement. Contacts the P site tRNA; the 5S rRNA and some of its associated proteins might help stabilize positioning of ribosome-bound tRNAs.</text>
</comment>
<comment type="subunit">
    <text evidence="1">Part of the 50S ribosomal subunit; part of the 5S rRNA/L5/L18/L25 subcomplex. Contacts the 5S rRNA and the P site tRNA. Forms a bridge to the 30S subunit in the 70S ribosome.</text>
</comment>
<comment type="similarity">
    <text evidence="1">Belongs to the universal ribosomal protein uL5 family.</text>
</comment>
<evidence type="ECO:0000255" key="1">
    <source>
        <dbReference type="HAMAP-Rule" id="MF_01333"/>
    </source>
</evidence>
<evidence type="ECO:0000305" key="2"/>
<accession>B3PK49</accession>
<dbReference type="EMBL" id="CP000934">
    <property type="protein sequence ID" value="ACE82946.1"/>
    <property type="molecule type" value="Genomic_DNA"/>
</dbReference>
<dbReference type="RefSeq" id="WP_012486374.1">
    <property type="nucleotide sequence ID" value="NC_010995.1"/>
</dbReference>
<dbReference type="SMR" id="B3PK49"/>
<dbReference type="STRING" id="498211.CJA_0711"/>
<dbReference type="KEGG" id="cja:CJA_0711"/>
<dbReference type="eggNOG" id="COG0094">
    <property type="taxonomic scope" value="Bacteria"/>
</dbReference>
<dbReference type="HOGENOM" id="CLU_061015_2_1_6"/>
<dbReference type="OrthoDB" id="9806626at2"/>
<dbReference type="Proteomes" id="UP000001036">
    <property type="component" value="Chromosome"/>
</dbReference>
<dbReference type="GO" id="GO:1990904">
    <property type="term" value="C:ribonucleoprotein complex"/>
    <property type="evidence" value="ECO:0007669"/>
    <property type="project" value="UniProtKB-KW"/>
</dbReference>
<dbReference type="GO" id="GO:0005840">
    <property type="term" value="C:ribosome"/>
    <property type="evidence" value="ECO:0007669"/>
    <property type="project" value="UniProtKB-KW"/>
</dbReference>
<dbReference type="GO" id="GO:0019843">
    <property type="term" value="F:rRNA binding"/>
    <property type="evidence" value="ECO:0007669"/>
    <property type="project" value="UniProtKB-UniRule"/>
</dbReference>
<dbReference type="GO" id="GO:0003735">
    <property type="term" value="F:structural constituent of ribosome"/>
    <property type="evidence" value="ECO:0007669"/>
    <property type="project" value="InterPro"/>
</dbReference>
<dbReference type="GO" id="GO:0000049">
    <property type="term" value="F:tRNA binding"/>
    <property type="evidence" value="ECO:0007669"/>
    <property type="project" value="UniProtKB-UniRule"/>
</dbReference>
<dbReference type="GO" id="GO:0006412">
    <property type="term" value="P:translation"/>
    <property type="evidence" value="ECO:0007669"/>
    <property type="project" value="UniProtKB-UniRule"/>
</dbReference>
<dbReference type="FunFam" id="3.30.1440.10:FF:000001">
    <property type="entry name" value="50S ribosomal protein L5"/>
    <property type="match status" value="1"/>
</dbReference>
<dbReference type="Gene3D" id="3.30.1440.10">
    <property type="match status" value="1"/>
</dbReference>
<dbReference type="HAMAP" id="MF_01333_B">
    <property type="entry name" value="Ribosomal_uL5_B"/>
    <property type="match status" value="1"/>
</dbReference>
<dbReference type="InterPro" id="IPR002132">
    <property type="entry name" value="Ribosomal_uL5"/>
</dbReference>
<dbReference type="InterPro" id="IPR020930">
    <property type="entry name" value="Ribosomal_uL5_bac-type"/>
</dbReference>
<dbReference type="InterPro" id="IPR031309">
    <property type="entry name" value="Ribosomal_uL5_C"/>
</dbReference>
<dbReference type="InterPro" id="IPR020929">
    <property type="entry name" value="Ribosomal_uL5_CS"/>
</dbReference>
<dbReference type="InterPro" id="IPR022803">
    <property type="entry name" value="Ribosomal_uL5_dom_sf"/>
</dbReference>
<dbReference type="InterPro" id="IPR031310">
    <property type="entry name" value="Ribosomal_uL5_N"/>
</dbReference>
<dbReference type="NCBIfam" id="NF000585">
    <property type="entry name" value="PRK00010.1"/>
    <property type="match status" value="1"/>
</dbReference>
<dbReference type="PANTHER" id="PTHR11994">
    <property type="entry name" value="60S RIBOSOMAL PROTEIN L11-RELATED"/>
    <property type="match status" value="1"/>
</dbReference>
<dbReference type="Pfam" id="PF00281">
    <property type="entry name" value="Ribosomal_L5"/>
    <property type="match status" value="1"/>
</dbReference>
<dbReference type="Pfam" id="PF00673">
    <property type="entry name" value="Ribosomal_L5_C"/>
    <property type="match status" value="1"/>
</dbReference>
<dbReference type="PIRSF" id="PIRSF002161">
    <property type="entry name" value="Ribosomal_L5"/>
    <property type="match status" value="1"/>
</dbReference>
<dbReference type="SUPFAM" id="SSF55282">
    <property type="entry name" value="RL5-like"/>
    <property type="match status" value="1"/>
</dbReference>
<dbReference type="PROSITE" id="PS00358">
    <property type="entry name" value="RIBOSOMAL_L5"/>
    <property type="match status" value="1"/>
</dbReference>